<organism>
    <name type="scientific">Kocuria rhizophila (strain ATCC 9341 / DSM 348 / NBRC 103217 / DC2201)</name>
    <dbReference type="NCBI Taxonomy" id="378753"/>
    <lineage>
        <taxon>Bacteria</taxon>
        <taxon>Bacillati</taxon>
        <taxon>Actinomycetota</taxon>
        <taxon>Actinomycetes</taxon>
        <taxon>Micrococcales</taxon>
        <taxon>Micrococcaceae</taxon>
        <taxon>Kocuria</taxon>
    </lineage>
</organism>
<proteinExistence type="inferred from homology"/>
<evidence type="ECO:0000255" key="1">
    <source>
        <dbReference type="HAMAP-Rule" id="MF_00014"/>
    </source>
</evidence>
<dbReference type="EMBL" id="AP009152">
    <property type="protein sequence ID" value="BAG29411.1"/>
    <property type="molecule type" value="Genomic_DNA"/>
</dbReference>
<dbReference type="RefSeq" id="WP_012398132.1">
    <property type="nucleotide sequence ID" value="NC_010617.1"/>
</dbReference>
<dbReference type="SMR" id="B2GFY3"/>
<dbReference type="STRING" id="378753.KRH_10640"/>
<dbReference type="KEGG" id="krh:KRH_10640"/>
<dbReference type="eggNOG" id="COG0806">
    <property type="taxonomic scope" value="Bacteria"/>
</dbReference>
<dbReference type="HOGENOM" id="CLU_077636_0_0_11"/>
<dbReference type="OrthoDB" id="5381335at2"/>
<dbReference type="Proteomes" id="UP000008838">
    <property type="component" value="Chromosome"/>
</dbReference>
<dbReference type="GO" id="GO:0005737">
    <property type="term" value="C:cytoplasm"/>
    <property type="evidence" value="ECO:0007669"/>
    <property type="project" value="UniProtKB-SubCell"/>
</dbReference>
<dbReference type="GO" id="GO:0005840">
    <property type="term" value="C:ribosome"/>
    <property type="evidence" value="ECO:0007669"/>
    <property type="project" value="InterPro"/>
</dbReference>
<dbReference type="GO" id="GO:0043022">
    <property type="term" value="F:ribosome binding"/>
    <property type="evidence" value="ECO:0007669"/>
    <property type="project" value="InterPro"/>
</dbReference>
<dbReference type="GO" id="GO:0042274">
    <property type="term" value="P:ribosomal small subunit biogenesis"/>
    <property type="evidence" value="ECO:0007669"/>
    <property type="project" value="UniProtKB-UniRule"/>
</dbReference>
<dbReference type="GO" id="GO:0006364">
    <property type="term" value="P:rRNA processing"/>
    <property type="evidence" value="ECO:0007669"/>
    <property type="project" value="UniProtKB-UniRule"/>
</dbReference>
<dbReference type="Gene3D" id="2.30.30.240">
    <property type="entry name" value="PRC-barrel domain"/>
    <property type="match status" value="1"/>
</dbReference>
<dbReference type="Gene3D" id="2.40.30.60">
    <property type="entry name" value="RimM"/>
    <property type="match status" value="1"/>
</dbReference>
<dbReference type="HAMAP" id="MF_00014">
    <property type="entry name" value="Ribosome_mat_RimM"/>
    <property type="match status" value="1"/>
</dbReference>
<dbReference type="InterPro" id="IPR011033">
    <property type="entry name" value="PRC_barrel-like_sf"/>
</dbReference>
<dbReference type="InterPro" id="IPR056792">
    <property type="entry name" value="PRC_RimM"/>
</dbReference>
<dbReference type="InterPro" id="IPR011961">
    <property type="entry name" value="RimM"/>
</dbReference>
<dbReference type="InterPro" id="IPR002676">
    <property type="entry name" value="RimM_N"/>
</dbReference>
<dbReference type="InterPro" id="IPR036976">
    <property type="entry name" value="RimM_N_sf"/>
</dbReference>
<dbReference type="InterPro" id="IPR009000">
    <property type="entry name" value="Transl_B-barrel_sf"/>
</dbReference>
<dbReference type="NCBIfam" id="TIGR02273">
    <property type="entry name" value="16S_RimM"/>
    <property type="match status" value="1"/>
</dbReference>
<dbReference type="PANTHER" id="PTHR33692">
    <property type="entry name" value="RIBOSOME MATURATION FACTOR RIMM"/>
    <property type="match status" value="1"/>
</dbReference>
<dbReference type="PANTHER" id="PTHR33692:SF1">
    <property type="entry name" value="RIBOSOME MATURATION FACTOR RIMM"/>
    <property type="match status" value="1"/>
</dbReference>
<dbReference type="Pfam" id="PF24986">
    <property type="entry name" value="PRC_RimM"/>
    <property type="match status" value="1"/>
</dbReference>
<dbReference type="Pfam" id="PF01782">
    <property type="entry name" value="RimM"/>
    <property type="match status" value="1"/>
</dbReference>
<dbReference type="SUPFAM" id="SSF50346">
    <property type="entry name" value="PRC-barrel domain"/>
    <property type="match status" value="1"/>
</dbReference>
<dbReference type="SUPFAM" id="SSF50447">
    <property type="entry name" value="Translation proteins"/>
    <property type="match status" value="1"/>
</dbReference>
<accession>B2GFY3</accession>
<protein>
    <recommendedName>
        <fullName evidence="1">Ribosome maturation factor RimM</fullName>
    </recommendedName>
</protein>
<keyword id="KW-0143">Chaperone</keyword>
<keyword id="KW-0963">Cytoplasm</keyword>
<keyword id="KW-1185">Reference proteome</keyword>
<keyword id="KW-0690">Ribosome biogenesis</keyword>
<keyword id="KW-0698">rRNA processing</keyword>
<sequence>MSVRVARIGKPHGVRGEVTVELFTDDPQARFAPGSVLSIQHARGGRRGQGSAADAREPLAVQSLTVTGHRWNKDVLVARFEEISDRNAAEAARGLELFAEVADLPLEDDEWHQDDLLGLVAVDLTRGEARIGTVKALIQGSAQDLLEITPQGGGRTVLVPFVEEIVPEVDLDRGLVLVSPPPGLLELGEGE</sequence>
<comment type="function">
    <text evidence="1">An accessory protein needed during the final step in the assembly of 30S ribosomal subunit, possibly for assembly of the head region. Essential for efficient processing of 16S rRNA. May be needed both before and after RbfA during the maturation of 16S rRNA. It has affinity for free ribosomal 30S subunits but not for 70S ribosomes.</text>
</comment>
<comment type="subunit">
    <text evidence="1">Binds ribosomal protein uS19.</text>
</comment>
<comment type="subcellular location">
    <subcellularLocation>
        <location evidence="1">Cytoplasm</location>
    </subcellularLocation>
</comment>
<comment type="domain">
    <text evidence="1">The PRC barrel domain binds ribosomal protein uS19.</text>
</comment>
<comment type="similarity">
    <text evidence="1">Belongs to the RimM family.</text>
</comment>
<gene>
    <name evidence="1" type="primary">rimM</name>
    <name type="ordered locus">KRH_10640</name>
</gene>
<feature type="chain" id="PRO_1000089504" description="Ribosome maturation factor RimM">
    <location>
        <begin position="1"/>
        <end position="191"/>
    </location>
</feature>
<feature type="domain" description="PRC barrel" evidence="1">
    <location>
        <begin position="107"/>
        <end position="184"/>
    </location>
</feature>
<reference key="1">
    <citation type="journal article" date="2008" name="J. Bacteriol.">
        <title>Complete genome sequence of the soil actinomycete Kocuria rhizophila.</title>
        <authorList>
            <person name="Takarada H."/>
            <person name="Sekine M."/>
            <person name="Kosugi H."/>
            <person name="Matsuo Y."/>
            <person name="Fujisawa T."/>
            <person name="Omata S."/>
            <person name="Kishi E."/>
            <person name="Shimizu A."/>
            <person name="Tsukatani N."/>
            <person name="Tanikawa S."/>
            <person name="Fujita N."/>
            <person name="Harayama S."/>
        </authorList>
    </citation>
    <scope>NUCLEOTIDE SEQUENCE [LARGE SCALE GENOMIC DNA]</scope>
    <source>
        <strain>ATCC 9341 / DSM 348 / NBRC 103217 / DC2201</strain>
    </source>
</reference>
<name>RIMM_KOCRD</name>